<dbReference type="EC" id="1.1.1.205" evidence="1"/>
<dbReference type="EMBL" id="CP000029">
    <property type="protein sequence ID" value="AAW53468.1"/>
    <property type="molecule type" value="Genomic_DNA"/>
</dbReference>
<dbReference type="RefSeq" id="WP_001829407.1">
    <property type="nucleotide sequence ID" value="NC_002976.3"/>
</dbReference>
<dbReference type="SMR" id="Q5HRX2"/>
<dbReference type="STRING" id="176279.SERP0069"/>
<dbReference type="GeneID" id="50019659"/>
<dbReference type="KEGG" id="ser:SERP0069"/>
<dbReference type="eggNOG" id="COG0516">
    <property type="taxonomic scope" value="Bacteria"/>
</dbReference>
<dbReference type="eggNOG" id="COG0517">
    <property type="taxonomic scope" value="Bacteria"/>
</dbReference>
<dbReference type="HOGENOM" id="CLU_022552_1_0_9"/>
<dbReference type="UniPathway" id="UPA00601">
    <property type="reaction ID" value="UER00295"/>
</dbReference>
<dbReference type="Proteomes" id="UP000000531">
    <property type="component" value="Chromosome"/>
</dbReference>
<dbReference type="GO" id="GO:0003938">
    <property type="term" value="F:IMP dehydrogenase activity"/>
    <property type="evidence" value="ECO:0007669"/>
    <property type="project" value="UniProtKB-UniRule"/>
</dbReference>
<dbReference type="GO" id="GO:0046872">
    <property type="term" value="F:metal ion binding"/>
    <property type="evidence" value="ECO:0007669"/>
    <property type="project" value="UniProtKB-UniRule"/>
</dbReference>
<dbReference type="GO" id="GO:0000166">
    <property type="term" value="F:nucleotide binding"/>
    <property type="evidence" value="ECO:0007669"/>
    <property type="project" value="UniProtKB-UniRule"/>
</dbReference>
<dbReference type="GO" id="GO:0006177">
    <property type="term" value="P:GMP biosynthetic process"/>
    <property type="evidence" value="ECO:0007669"/>
    <property type="project" value="UniProtKB-UniRule"/>
</dbReference>
<dbReference type="GO" id="GO:0006183">
    <property type="term" value="P:GTP biosynthetic process"/>
    <property type="evidence" value="ECO:0007669"/>
    <property type="project" value="TreeGrafter"/>
</dbReference>
<dbReference type="CDD" id="cd04601">
    <property type="entry name" value="CBS_pair_IMPDH"/>
    <property type="match status" value="1"/>
</dbReference>
<dbReference type="CDD" id="cd00381">
    <property type="entry name" value="IMPDH"/>
    <property type="match status" value="1"/>
</dbReference>
<dbReference type="FunFam" id="3.20.20.70:FF:000003">
    <property type="entry name" value="GMP reductase"/>
    <property type="match status" value="1"/>
</dbReference>
<dbReference type="Gene3D" id="3.20.20.70">
    <property type="entry name" value="Aldolase class I"/>
    <property type="match status" value="1"/>
</dbReference>
<dbReference type="HAMAP" id="MF_01964">
    <property type="entry name" value="IMPDH"/>
    <property type="match status" value="1"/>
</dbReference>
<dbReference type="InterPro" id="IPR013785">
    <property type="entry name" value="Aldolase_TIM"/>
</dbReference>
<dbReference type="InterPro" id="IPR000644">
    <property type="entry name" value="CBS_dom"/>
</dbReference>
<dbReference type="InterPro" id="IPR046342">
    <property type="entry name" value="CBS_dom_sf"/>
</dbReference>
<dbReference type="InterPro" id="IPR005990">
    <property type="entry name" value="IMP_DH"/>
</dbReference>
<dbReference type="InterPro" id="IPR015875">
    <property type="entry name" value="IMP_DH/GMP_Rdtase_CS"/>
</dbReference>
<dbReference type="InterPro" id="IPR001093">
    <property type="entry name" value="IMP_DH_GMPRt"/>
</dbReference>
<dbReference type="NCBIfam" id="TIGR01302">
    <property type="entry name" value="IMP_dehydrog"/>
    <property type="match status" value="1"/>
</dbReference>
<dbReference type="PANTHER" id="PTHR11911:SF111">
    <property type="entry name" value="INOSINE-5'-MONOPHOSPHATE DEHYDROGENASE"/>
    <property type="match status" value="1"/>
</dbReference>
<dbReference type="PANTHER" id="PTHR11911">
    <property type="entry name" value="INOSINE-5-MONOPHOSPHATE DEHYDROGENASE RELATED"/>
    <property type="match status" value="1"/>
</dbReference>
<dbReference type="Pfam" id="PF00571">
    <property type="entry name" value="CBS"/>
    <property type="match status" value="2"/>
</dbReference>
<dbReference type="Pfam" id="PF00478">
    <property type="entry name" value="IMPDH"/>
    <property type="match status" value="1"/>
</dbReference>
<dbReference type="PIRSF" id="PIRSF000130">
    <property type="entry name" value="IMPDH"/>
    <property type="match status" value="1"/>
</dbReference>
<dbReference type="SMART" id="SM00116">
    <property type="entry name" value="CBS"/>
    <property type="match status" value="2"/>
</dbReference>
<dbReference type="SMART" id="SM01240">
    <property type="entry name" value="IMPDH"/>
    <property type="match status" value="1"/>
</dbReference>
<dbReference type="SUPFAM" id="SSF54631">
    <property type="entry name" value="CBS-domain pair"/>
    <property type="match status" value="1"/>
</dbReference>
<dbReference type="SUPFAM" id="SSF51412">
    <property type="entry name" value="Inosine monophosphate dehydrogenase (IMPDH)"/>
    <property type="match status" value="1"/>
</dbReference>
<dbReference type="PROSITE" id="PS51371">
    <property type="entry name" value="CBS"/>
    <property type="match status" value="2"/>
</dbReference>
<dbReference type="PROSITE" id="PS00487">
    <property type="entry name" value="IMP_DH_GMP_RED"/>
    <property type="match status" value="1"/>
</dbReference>
<name>IMDH_STAEQ</name>
<keyword id="KW-0129">CBS domain</keyword>
<keyword id="KW-0332">GMP biosynthesis</keyword>
<keyword id="KW-0479">Metal-binding</keyword>
<keyword id="KW-0520">NAD</keyword>
<keyword id="KW-0560">Oxidoreductase</keyword>
<keyword id="KW-0630">Potassium</keyword>
<keyword id="KW-0658">Purine biosynthesis</keyword>
<keyword id="KW-1185">Reference proteome</keyword>
<keyword id="KW-0677">Repeat</keyword>
<accession>Q5HRX2</accession>
<protein>
    <recommendedName>
        <fullName evidence="1">Inosine-5'-monophosphate dehydrogenase</fullName>
        <shortName evidence="1">IMP dehydrogenase</shortName>
        <shortName evidence="1">IMPD</shortName>
        <shortName evidence="1">IMPDH</shortName>
        <ecNumber evidence="1">1.1.1.205</ecNumber>
    </recommendedName>
</protein>
<reference key="1">
    <citation type="journal article" date="2005" name="J. Bacteriol.">
        <title>Insights on evolution of virulence and resistance from the complete genome analysis of an early methicillin-resistant Staphylococcus aureus strain and a biofilm-producing methicillin-resistant Staphylococcus epidermidis strain.</title>
        <authorList>
            <person name="Gill S.R."/>
            <person name="Fouts D.E."/>
            <person name="Archer G.L."/>
            <person name="Mongodin E.F."/>
            <person name="DeBoy R.T."/>
            <person name="Ravel J."/>
            <person name="Paulsen I.T."/>
            <person name="Kolonay J.F."/>
            <person name="Brinkac L.M."/>
            <person name="Beanan M.J."/>
            <person name="Dodson R.J."/>
            <person name="Daugherty S.C."/>
            <person name="Madupu R."/>
            <person name="Angiuoli S.V."/>
            <person name="Durkin A.S."/>
            <person name="Haft D.H."/>
            <person name="Vamathevan J.J."/>
            <person name="Khouri H."/>
            <person name="Utterback T.R."/>
            <person name="Lee C."/>
            <person name="Dimitrov G."/>
            <person name="Jiang L."/>
            <person name="Qin H."/>
            <person name="Weidman J."/>
            <person name="Tran K."/>
            <person name="Kang K.H."/>
            <person name="Hance I.R."/>
            <person name="Nelson K.E."/>
            <person name="Fraser C.M."/>
        </authorList>
    </citation>
    <scope>NUCLEOTIDE SEQUENCE [LARGE SCALE GENOMIC DNA]</scope>
    <source>
        <strain>ATCC 35984 / DSM 28319 / BCRC 17069 / CCUG 31568 / BM 3577 / RP62A</strain>
    </source>
</reference>
<evidence type="ECO:0000255" key="1">
    <source>
        <dbReference type="HAMAP-Rule" id="MF_01964"/>
    </source>
</evidence>
<evidence type="ECO:0000256" key="2">
    <source>
        <dbReference type="SAM" id="MobiDB-lite"/>
    </source>
</evidence>
<organism>
    <name type="scientific">Staphylococcus epidermidis (strain ATCC 35984 / DSM 28319 / BCRC 17069 / CCUG 31568 / BM 3577 / RP62A)</name>
    <dbReference type="NCBI Taxonomy" id="176279"/>
    <lineage>
        <taxon>Bacteria</taxon>
        <taxon>Bacillati</taxon>
        <taxon>Bacillota</taxon>
        <taxon>Bacilli</taxon>
        <taxon>Bacillales</taxon>
        <taxon>Staphylococcaceae</taxon>
        <taxon>Staphylococcus</taxon>
    </lineage>
</organism>
<feature type="chain" id="PRO_0000093713" description="Inosine-5'-monophosphate dehydrogenase">
    <location>
        <begin position="1"/>
        <end position="488"/>
    </location>
</feature>
<feature type="domain" description="CBS 1" evidence="1">
    <location>
        <begin position="95"/>
        <end position="153"/>
    </location>
</feature>
<feature type="domain" description="CBS 2" evidence="1">
    <location>
        <begin position="157"/>
        <end position="216"/>
    </location>
</feature>
<feature type="region of interest" description="Disordered" evidence="2">
    <location>
        <begin position="467"/>
        <end position="488"/>
    </location>
</feature>
<feature type="compositionally biased region" description="Polar residues" evidence="2">
    <location>
        <begin position="475"/>
        <end position="488"/>
    </location>
</feature>
<feature type="active site" description="Thioimidate intermediate" evidence="1">
    <location>
        <position position="307"/>
    </location>
</feature>
<feature type="active site" description="Proton acceptor" evidence="1">
    <location>
        <position position="403"/>
    </location>
</feature>
<feature type="binding site" evidence="1">
    <location>
        <position position="250"/>
    </location>
    <ligand>
        <name>NAD(+)</name>
        <dbReference type="ChEBI" id="CHEBI:57540"/>
    </ligand>
</feature>
<feature type="binding site" evidence="1">
    <location>
        <begin position="300"/>
        <end position="302"/>
    </location>
    <ligand>
        <name>NAD(+)</name>
        <dbReference type="ChEBI" id="CHEBI:57540"/>
    </ligand>
</feature>
<feature type="binding site" description="in other chain" evidence="1">
    <location>
        <position position="302"/>
    </location>
    <ligand>
        <name>K(+)</name>
        <dbReference type="ChEBI" id="CHEBI:29103"/>
        <note>ligand shared between two tetrameric partners</note>
    </ligand>
</feature>
<feature type="binding site" description="in other chain" evidence="1">
    <location>
        <position position="304"/>
    </location>
    <ligand>
        <name>K(+)</name>
        <dbReference type="ChEBI" id="CHEBI:29103"/>
        <note>ligand shared between two tetrameric partners</note>
    </ligand>
</feature>
<feature type="binding site" evidence="1">
    <location>
        <position position="305"/>
    </location>
    <ligand>
        <name>IMP</name>
        <dbReference type="ChEBI" id="CHEBI:58053"/>
    </ligand>
</feature>
<feature type="binding site" description="in other chain" evidence="1">
    <location>
        <position position="307"/>
    </location>
    <ligand>
        <name>K(+)</name>
        <dbReference type="ChEBI" id="CHEBI:29103"/>
        <note>ligand shared between two tetrameric partners</note>
    </ligand>
</feature>
<feature type="binding site" evidence="1">
    <location>
        <begin position="340"/>
        <end position="342"/>
    </location>
    <ligand>
        <name>IMP</name>
        <dbReference type="ChEBI" id="CHEBI:58053"/>
    </ligand>
</feature>
<feature type="binding site" evidence="1">
    <location>
        <begin position="363"/>
        <end position="364"/>
    </location>
    <ligand>
        <name>IMP</name>
        <dbReference type="ChEBI" id="CHEBI:58053"/>
    </ligand>
</feature>
<feature type="binding site" evidence="1">
    <location>
        <begin position="387"/>
        <end position="391"/>
    </location>
    <ligand>
        <name>IMP</name>
        <dbReference type="ChEBI" id="CHEBI:58053"/>
    </ligand>
</feature>
<feature type="binding site" evidence="1">
    <location>
        <position position="417"/>
    </location>
    <ligand>
        <name>IMP</name>
        <dbReference type="ChEBI" id="CHEBI:58053"/>
    </ligand>
</feature>
<feature type="binding site" evidence="1">
    <location>
        <position position="471"/>
    </location>
    <ligand>
        <name>K(+)</name>
        <dbReference type="ChEBI" id="CHEBI:29103"/>
        <note>ligand shared between two tetrameric partners</note>
    </ligand>
</feature>
<feature type="binding site" evidence="1">
    <location>
        <position position="472"/>
    </location>
    <ligand>
        <name>K(+)</name>
        <dbReference type="ChEBI" id="CHEBI:29103"/>
        <note>ligand shared between two tetrameric partners</note>
    </ligand>
</feature>
<feature type="binding site" evidence="1">
    <location>
        <position position="473"/>
    </location>
    <ligand>
        <name>K(+)</name>
        <dbReference type="ChEBI" id="CHEBI:29103"/>
        <note>ligand shared between two tetrameric partners</note>
    </ligand>
</feature>
<gene>
    <name evidence="1" type="primary">guaB</name>
    <name type="ordered locus">SERP0069</name>
</gene>
<comment type="function">
    <text evidence="1">Catalyzes the conversion of inosine 5'-phosphate (IMP) to xanthosine 5'-phosphate (XMP), the first committed and rate-limiting step in the de novo synthesis of guanine nucleotides, and therefore plays an important role in the regulation of cell growth.</text>
</comment>
<comment type="catalytic activity">
    <reaction evidence="1">
        <text>IMP + NAD(+) + H2O = XMP + NADH + H(+)</text>
        <dbReference type="Rhea" id="RHEA:11708"/>
        <dbReference type="ChEBI" id="CHEBI:15377"/>
        <dbReference type="ChEBI" id="CHEBI:15378"/>
        <dbReference type="ChEBI" id="CHEBI:57464"/>
        <dbReference type="ChEBI" id="CHEBI:57540"/>
        <dbReference type="ChEBI" id="CHEBI:57945"/>
        <dbReference type="ChEBI" id="CHEBI:58053"/>
        <dbReference type="EC" id="1.1.1.205"/>
    </reaction>
</comment>
<comment type="cofactor">
    <cofactor evidence="1">
        <name>K(+)</name>
        <dbReference type="ChEBI" id="CHEBI:29103"/>
    </cofactor>
</comment>
<comment type="activity regulation">
    <text evidence="1">Mycophenolic acid (MPA) is a non-competitive inhibitor that prevents formation of the closed enzyme conformation by binding to the same site as the amobile flap. In contrast, mizoribine monophosphate (MZP) is a competitive inhibitor that induces the closed conformation. MPA is a potent inhibitor of mammalian IMPDHs but a poor inhibitor of the bacterial enzymes. MZP is a more potent inhibitor of bacterial IMPDH.</text>
</comment>
<comment type="pathway">
    <text evidence="1">Purine metabolism; XMP biosynthesis via de novo pathway; XMP from IMP: step 1/1.</text>
</comment>
<comment type="subunit">
    <text evidence="1">Homotetramer.</text>
</comment>
<comment type="similarity">
    <text evidence="1">Belongs to the IMPDH/GMPR family.</text>
</comment>
<sequence>MWENKFAKESLTFDDVLLIPAASDVLPSDVDLSVKLSDKIKLNIPVISAGMDTVTESKMAIAMARQGGLGVIHKNMGVEEQADEVQKVKRSENGVISNPFFLTPEESVYEAEALMGKYRISGVPIVDNQEDRKLIGILTNRDLRFIEDFSIKISDVMTKDNLITAPVGTTLDEAEAILQKHKIEKLPLVENGRLEGLITIKDIEKVLEFPYAAKDEHGRLLAAAAIGTSKDTEIRAQKLVEAGVDALIIDTAHGHSKGVINQVKHIKETYPEITVVAGNVATAEATRALFEAGADVVKVGIGPGSICTTRVVAGVGVPQITAVYDCATEARKHGKAIIADGGIKFSGDIIKALAAGGHAVMLGSLLAGTEESPGATEVFQGRQYKVYRGMGSLGAMEKGSNDRYFQEDKTPRKFVPEGIEGRTAYKGPLQDTIYQLMGGVRAGMGYTGSENLKKLREEAQFTRMGPAGLAESHPHNVQITKESPNYSF</sequence>
<proteinExistence type="inferred from homology"/>